<protein>
    <recommendedName>
        <fullName evidence="1">Aspartyl/glutamyl-tRNA(Asn/Gln) amidotransferase subunit C</fullName>
        <shortName evidence="1">Asp/Glu-ADT subunit C</shortName>
        <ecNumber evidence="1">6.3.5.-</ecNumber>
    </recommendedName>
</protein>
<organism>
    <name type="scientific">Wolinella succinogenes (strain ATCC 29543 / DSM 1740 / CCUG 13145 / JCM 31913 / LMG 7466 / NCTC 11488 / FDC 602W)</name>
    <name type="common">Vibrio succinogenes</name>
    <dbReference type="NCBI Taxonomy" id="273121"/>
    <lineage>
        <taxon>Bacteria</taxon>
        <taxon>Pseudomonadati</taxon>
        <taxon>Campylobacterota</taxon>
        <taxon>Epsilonproteobacteria</taxon>
        <taxon>Campylobacterales</taxon>
        <taxon>Helicobacteraceae</taxon>
        <taxon>Wolinella</taxon>
    </lineage>
</organism>
<accession>Q7MSD5</accession>
<proteinExistence type="inferred from homology"/>
<sequence length="96" mass="10840">MQIDDKLLARLESLAMIEVPEEKKESIKAELGEIVNFVENLNSLEVEGLEATFTTLEGKTPMREDTPMNDEEIPALILKHAPQSAENYFIVPKIIE</sequence>
<dbReference type="EC" id="6.3.5.-" evidence="1"/>
<dbReference type="EMBL" id="BX571658">
    <property type="protein sequence ID" value="CAE09692.1"/>
    <property type="molecule type" value="Genomic_DNA"/>
</dbReference>
<dbReference type="RefSeq" id="WP_011138492.1">
    <property type="nucleotide sequence ID" value="NC_005090.1"/>
</dbReference>
<dbReference type="SMR" id="Q7MSD5"/>
<dbReference type="STRING" id="273121.WS0558"/>
<dbReference type="KEGG" id="wsu:WS0558"/>
<dbReference type="eggNOG" id="COG0721">
    <property type="taxonomic scope" value="Bacteria"/>
</dbReference>
<dbReference type="HOGENOM" id="CLU_105899_2_1_7"/>
<dbReference type="Proteomes" id="UP000000422">
    <property type="component" value="Chromosome"/>
</dbReference>
<dbReference type="GO" id="GO:0050566">
    <property type="term" value="F:asparaginyl-tRNA synthase (glutamine-hydrolyzing) activity"/>
    <property type="evidence" value="ECO:0007669"/>
    <property type="project" value="RHEA"/>
</dbReference>
<dbReference type="GO" id="GO:0005524">
    <property type="term" value="F:ATP binding"/>
    <property type="evidence" value="ECO:0007669"/>
    <property type="project" value="UniProtKB-KW"/>
</dbReference>
<dbReference type="GO" id="GO:0050567">
    <property type="term" value="F:glutaminyl-tRNA synthase (glutamine-hydrolyzing) activity"/>
    <property type="evidence" value="ECO:0007669"/>
    <property type="project" value="UniProtKB-UniRule"/>
</dbReference>
<dbReference type="GO" id="GO:0070681">
    <property type="term" value="P:glutaminyl-tRNAGln biosynthesis via transamidation"/>
    <property type="evidence" value="ECO:0007669"/>
    <property type="project" value="TreeGrafter"/>
</dbReference>
<dbReference type="GO" id="GO:0006450">
    <property type="term" value="P:regulation of translational fidelity"/>
    <property type="evidence" value="ECO:0007669"/>
    <property type="project" value="InterPro"/>
</dbReference>
<dbReference type="GO" id="GO:0006412">
    <property type="term" value="P:translation"/>
    <property type="evidence" value="ECO:0007669"/>
    <property type="project" value="UniProtKB-UniRule"/>
</dbReference>
<dbReference type="Gene3D" id="1.10.20.60">
    <property type="entry name" value="Glu-tRNAGln amidotransferase C subunit, N-terminal domain"/>
    <property type="match status" value="1"/>
</dbReference>
<dbReference type="HAMAP" id="MF_00122">
    <property type="entry name" value="GatC"/>
    <property type="match status" value="1"/>
</dbReference>
<dbReference type="InterPro" id="IPR036113">
    <property type="entry name" value="Asp/Glu-ADT_sf_sub_c"/>
</dbReference>
<dbReference type="InterPro" id="IPR003837">
    <property type="entry name" value="GatC"/>
</dbReference>
<dbReference type="NCBIfam" id="TIGR00135">
    <property type="entry name" value="gatC"/>
    <property type="match status" value="1"/>
</dbReference>
<dbReference type="PANTHER" id="PTHR15004">
    <property type="entry name" value="GLUTAMYL-TRNA(GLN) AMIDOTRANSFERASE SUBUNIT C, MITOCHONDRIAL"/>
    <property type="match status" value="1"/>
</dbReference>
<dbReference type="PANTHER" id="PTHR15004:SF0">
    <property type="entry name" value="GLUTAMYL-TRNA(GLN) AMIDOTRANSFERASE SUBUNIT C, MITOCHONDRIAL"/>
    <property type="match status" value="1"/>
</dbReference>
<dbReference type="Pfam" id="PF02686">
    <property type="entry name" value="GatC"/>
    <property type="match status" value="1"/>
</dbReference>
<dbReference type="SUPFAM" id="SSF141000">
    <property type="entry name" value="Glu-tRNAGln amidotransferase C subunit"/>
    <property type="match status" value="1"/>
</dbReference>
<keyword id="KW-0067">ATP-binding</keyword>
<keyword id="KW-0436">Ligase</keyword>
<keyword id="KW-0547">Nucleotide-binding</keyword>
<keyword id="KW-0648">Protein biosynthesis</keyword>
<keyword id="KW-1185">Reference proteome</keyword>
<evidence type="ECO:0000255" key="1">
    <source>
        <dbReference type="HAMAP-Rule" id="MF_00122"/>
    </source>
</evidence>
<feature type="chain" id="PRO_0000105356" description="Aspartyl/glutamyl-tRNA(Asn/Gln) amidotransferase subunit C">
    <location>
        <begin position="1"/>
        <end position="96"/>
    </location>
</feature>
<comment type="function">
    <text evidence="1">Allows the formation of correctly charged Asn-tRNA(Asn) or Gln-tRNA(Gln) through the transamidation of misacylated Asp-tRNA(Asn) or Glu-tRNA(Gln) in organisms which lack either or both of asparaginyl-tRNA or glutaminyl-tRNA synthetases. The reaction takes place in the presence of glutamine and ATP through an activated phospho-Asp-tRNA(Asn) or phospho-Glu-tRNA(Gln).</text>
</comment>
<comment type="catalytic activity">
    <reaction evidence="1">
        <text>L-glutamyl-tRNA(Gln) + L-glutamine + ATP + H2O = L-glutaminyl-tRNA(Gln) + L-glutamate + ADP + phosphate + H(+)</text>
        <dbReference type="Rhea" id="RHEA:17521"/>
        <dbReference type="Rhea" id="RHEA-COMP:9681"/>
        <dbReference type="Rhea" id="RHEA-COMP:9684"/>
        <dbReference type="ChEBI" id="CHEBI:15377"/>
        <dbReference type="ChEBI" id="CHEBI:15378"/>
        <dbReference type="ChEBI" id="CHEBI:29985"/>
        <dbReference type="ChEBI" id="CHEBI:30616"/>
        <dbReference type="ChEBI" id="CHEBI:43474"/>
        <dbReference type="ChEBI" id="CHEBI:58359"/>
        <dbReference type="ChEBI" id="CHEBI:78520"/>
        <dbReference type="ChEBI" id="CHEBI:78521"/>
        <dbReference type="ChEBI" id="CHEBI:456216"/>
    </reaction>
</comment>
<comment type="catalytic activity">
    <reaction evidence="1">
        <text>L-aspartyl-tRNA(Asn) + L-glutamine + ATP + H2O = L-asparaginyl-tRNA(Asn) + L-glutamate + ADP + phosphate + 2 H(+)</text>
        <dbReference type="Rhea" id="RHEA:14513"/>
        <dbReference type="Rhea" id="RHEA-COMP:9674"/>
        <dbReference type="Rhea" id="RHEA-COMP:9677"/>
        <dbReference type="ChEBI" id="CHEBI:15377"/>
        <dbReference type="ChEBI" id="CHEBI:15378"/>
        <dbReference type="ChEBI" id="CHEBI:29985"/>
        <dbReference type="ChEBI" id="CHEBI:30616"/>
        <dbReference type="ChEBI" id="CHEBI:43474"/>
        <dbReference type="ChEBI" id="CHEBI:58359"/>
        <dbReference type="ChEBI" id="CHEBI:78515"/>
        <dbReference type="ChEBI" id="CHEBI:78516"/>
        <dbReference type="ChEBI" id="CHEBI:456216"/>
    </reaction>
</comment>
<comment type="subunit">
    <text evidence="1">Heterotrimer of A, B and C subunits.</text>
</comment>
<comment type="similarity">
    <text evidence="1">Belongs to the GatC family.</text>
</comment>
<gene>
    <name evidence="1" type="primary">gatC</name>
    <name type="ordered locus">WS0558</name>
</gene>
<name>GATC_WOLSU</name>
<reference key="1">
    <citation type="journal article" date="2003" name="Proc. Natl. Acad. Sci. U.S.A.">
        <title>Complete genome sequence and analysis of Wolinella succinogenes.</title>
        <authorList>
            <person name="Baar C."/>
            <person name="Eppinger M."/>
            <person name="Raddatz G."/>
            <person name="Simon J."/>
            <person name="Lanz C."/>
            <person name="Klimmek O."/>
            <person name="Nandakumar R."/>
            <person name="Gross R."/>
            <person name="Rosinus A."/>
            <person name="Keller H."/>
            <person name="Jagtap P."/>
            <person name="Linke B."/>
            <person name="Meyer F."/>
            <person name="Lederer H."/>
            <person name="Schuster S.C."/>
        </authorList>
    </citation>
    <scope>NUCLEOTIDE SEQUENCE [LARGE SCALE GENOMIC DNA]</scope>
    <source>
        <strain>ATCC 29543 / DSM 1740 / CCUG 13145 / JCM 31913 / LMG 7466 / NCTC 11488 / FDC 602W</strain>
    </source>
</reference>